<organism>
    <name type="scientific">Photorhabdus laumondii subsp. laumondii (strain DSM 15139 / CIP 105565 / TT01)</name>
    <name type="common">Photorhabdus luminescens subsp. laumondii</name>
    <dbReference type="NCBI Taxonomy" id="243265"/>
    <lineage>
        <taxon>Bacteria</taxon>
        <taxon>Pseudomonadati</taxon>
        <taxon>Pseudomonadota</taxon>
        <taxon>Gammaproteobacteria</taxon>
        <taxon>Enterobacterales</taxon>
        <taxon>Morganellaceae</taxon>
        <taxon>Photorhabdus</taxon>
    </lineage>
</organism>
<dbReference type="EC" id="3.6.4.-" evidence="1"/>
<dbReference type="EMBL" id="BX571866">
    <property type="protein sequence ID" value="CAE14405.1"/>
    <property type="molecule type" value="Genomic_DNA"/>
</dbReference>
<dbReference type="RefSeq" id="WP_011146366.1">
    <property type="nucleotide sequence ID" value="NC_005126.1"/>
</dbReference>
<dbReference type="SMR" id="Q7N547"/>
<dbReference type="STRING" id="243265.plu2112"/>
<dbReference type="GeneID" id="48848391"/>
<dbReference type="KEGG" id="plu:plu2112"/>
<dbReference type="eggNOG" id="COG2255">
    <property type="taxonomic scope" value="Bacteria"/>
</dbReference>
<dbReference type="HOGENOM" id="CLU_055599_1_0_6"/>
<dbReference type="OrthoDB" id="9804478at2"/>
<dbReference type="Proteomes" id="UP000002514">
    <property type="component" value="Chromosome"/>
</dbReference>
<dbReference type="GO" id="GO:0005737">
    <property type="term" value="C:cytoplasm"/>
    <property type="evidence" value="ECO:0007669"/>
    <property type="project" value="UniProtKB-SubCell"/>
</dbReference>
<dbReference type="GO" id="GO:0048476">
    <property type="term" value="C:Holliday junction resolvase complex"/>
    <property type="evidence" value="ECO:0007669"/>
    <property type="project" value="UniProtKB-UniRule"/>
</dbReference>
<dbReference type="GO" id="GO:0005524">
    <property type="term" value="F:ATP binding"/>
    <property type="evidence" value="ECO:0007669"/>
    <property type="project" value="UniProtKB-UniRule"/>
</dbReference>
<dbReference type="GO" id="GO:0016887">
    <property type="term" value="F:ATP hydrolysis activity"/>
    <property type="evidence" value="ECO:0007669"/>
    <property type="project" value="InterPro"/>
</dbReference>
<dbReference type="GO" id="GO:0000400">
    <property type="term" value="F:four-way junction DNA binding"/>
    <property type="evidence" value="ECO:0007669"/>
    <property type="project" value="UniProtKB-UniRule"/>
</dbReference>
<dbReference type="GO" id="GO:0009378">
    <property type="term" value="F:four-way junction helicase activity"/>
    <property type="evidence" value="ECO:0007669"/>
    <property type="project" value="InterPro"/>
</dbReference>
<dbReference type="GO" id="GO:0006310">
    <property type="term" value="P:DNA recombination"/>
    <property type="evidence" value="ECO:0007669"/>
    <property type="project" value="UniProtKB-UniRule"/>
</dbReference>
<dbReference type="GO" id="GO:0006281">
    <property type="term" value="P:DNA repair"/>
    <property type="evidence" value="ECO:0007669"/>
    <property type="project" value="UniProtKB-UniRule"/>
</dbReference>
<dbReference type="CDD" id="cd00009">
    <property type="entry name" value="AAA"/>
    <property type="match status" value="1"/>
</dbReference>
<dbReference type="FunFam" id="1.10.10.10:FF:000086">
    <property type="entry name" value="Holliday junction ATP-dependent DNA helicase RuvB"/>
    <property type="match status" value="1"/>
</dbReference>
<dbReference type="FunFam" id="1.10.8.60:FF:000023">
    <property type="entry name" value="Holliday junction ATP-dependent DNA helicase RuvB"/>
    <property type="match status" value="1"/>
</dbReference>
<dbReference type="FunFam" id="3.40.50.300:FF:000073">
    <property type="entry name" value="Holliday junction ATP-dependent DNA helicase RuvB"/>
    <property type="match status" value="1"/>
</dbReference>
<dbReference type="Gene3D" id="1.10.8.60">
    <property type="match status" value="1"/>
</dbReference>
<dbReference type="Gene3D" id="3.40.50.300">
    <property type="entry name" value="P-loop containing nucleotide triphosphate hydrolases"/>
    <property type="match status" value="1"/>
</dbReference>
<dbReference type="Gene3D" id="1.10.10.10">
    <property type="entry name" value="Winged helix-like DNA-binding domain superfamily/Winged helix DNA-binding domain"/>
    <property type="match status" value="1"/>
</dbReference>
<dbReference type="HAMAP" id="MF_00016">
    <property type="entry name" value="DNA_HJ_migration_RuvB"/>
    <property type="match status" value="1"/>
</dbReference>
<dbReference type="InterPro" id="IPR003593">
    <property type="entry name" value="AAA+_ATPase"/>
</dbReference>
<dbReference type="InterPro" id="IPR041445">
    <property type="entry name" value="AAA_lid_4"/>
</dbReference>
<dbReference type="InterPro" id="IPR004605">
    <property type="entry name" value="DNA_helicase_Holl-junc_RuvB"/>
</dbReference>
<dbReference type="InterPro" id="IPR027417">
    <property type="entry name" value="P-loop_NTPase"/>
</dbReference>
<dbReference type="InterPro" id="IPR008824">
    <property type="entry name" value="RuvB-like_N"/>
</dbReference>
<dbReference type="InterPro" id="IPR008823">
    <property type="entry name" value="RuvB_C"/>
</dbReference>
<dbReference type="InterPro" id="IPR036388">
    <property type="entry name" value="WH-like_DNA-bd_sf"/>
</dbReference>
<dbReference type="InterPro" id="IPR036390">
    <property type="entry name" value="WH_DNA-bd_sf"/>
</dbReference>
<dbReference type="NCBIfam" id="NF000868">
    <property type="entry name" value="PRK00080.1"/>
    <property type="match status" value="1"/>
</dbReference>
<dbReference type="NCBIfam" id="TIGR00635">
    <property type="entry name" value="ruvB"/>
    <property type="match status" value="1"/>
</dbReference>
<dbReference type="PANTHER" id="PTHR42848">
    <property type="match status" value="1"/>
</dbReference>
<dbReference type="PANTHER" id="PTHR42848:SF1">
    <property type="entry name" value="HOLLIDAY JUNCTION BRANCH MIGRATION COMPLEX SUBUNIT RUVB"/>
    <property type="match status" value="1"/>
</dbReference>
<dbReference type="Pfam" id="PF17864">
    <property type="entry name" value="AAA_lid_4"/>
    <property type="match status" value="1"/>
</dbReference>
<dbReference type="Pfam" id="PF05491">
    <property type="entry name" value="RuvB_C"/>
    <property type="match status" value="1"/>
</dbReference>
<dbReference type="Pfam" id="PF05496">
    <property type="entry name" value="RuvB_N"/>
    <property type="match status" value="1"/>
</dbReference>
<dbReference type="SMART" id="SM00382">
    <property type="entry name" value="AAA"/>
    <property type="match status" value="1"/>
</dbReference>
<dbReference type="SUPFAM" id="SSF52540">
    <property type="entry name" value="P-loop containing nucleoside triphosphate hydrolases"/>
    <property type="match status" value="1"/>
</dbReference>
<dbReference type="SUPFAM" id="SSF46785">
    <property type="entry name" value="Winged helix' DNA-binding domain"/>
    <property type="match status" value="1"/>
</dbReference>
<gene>
    <name evidence="1" type="primary">ruvB</name>
    <name type="ordered locus">plu2112</name>
</gene>
<reference key="1">
    <citation type="journal article" date="2003" name="Nat. Biotechnol.">
        <title>The genome sequence of the entomopathogenic bacterium Photorhabdus luminescens.</title>
        <authorList>
            <person name="Duchaud E."/>
            <person name="Rusniok C."/>
            <person name="Frangeul L."/>
            <person name="Buchrieser C."/>
            <person name="Givaudan A."/>
            <person name="Taourit S."/>
            <person name="Bocs S."/>
            <person name="Boursaux-Eude C."/>
            <person name="Chandler M."/>
            <person name="Charles J.-F."/>
            <person name="Dassa E."/>
            <person name="Derose R."/>
            <person name="Derzelle S."/>
            <person name="Freyssinet G."/>
            <person name="Gaudriault S."/>
            <person name="Medigue C."/>
            <person name="Lanois A."/>
            <person name="Powell K."/>
            <person name="Siguier P."/>
            <person name="Vincent R."/>
            <person name="Wingate V."/>
            <person name="Zouine M."/>
            <person name="Glaser P."/>
            <person name="Boemare N."/>
            <person name="Danchin A."/>
            <person name="Kunst F."/>
        </authorList>
    </citation>
    <scope>NUCLEOTIDE SEQUENCE [LARGE SCALE GENOMIC DNA]</scope>
    <source>
        <strain>DSM 15139 / CIP 105565 / TT01</strain>
    </source>
</reference>
<feature type="chain" id="PRO_0000165571" description="Holliday junction branch migration complex subunit RuvB">
    <location>
        <begin position="1"/>
        <end position="335"/>
    </location>
</feature>
<feature type="region of interest" description="Large ATPase domain (RuvB-L)" evidence="1">
    <location>
        <begin position="4"/>
        <end position="184"/>
    </location>
</feature>
<feature type="region of interest" description="Small ATPAse domain (RuvB-S)" evidence="1">
    <location>
        <begin position="185"/>
        <end position="255"/>
    </location>
</feature>
<feature type="region of interest" description="Head domain (RuvB-H)" evidence="1">
    <location>
        <begin position="258"/>
        <end position="335"/>
    </location>
</feature>
<feature type="binding site" evidence="1">
    <location>
        <position position="23"/>
    </location>
    <ligand>
        <name>ATP</name>
        <dbReference type="ChEBI" id="CHEBI:30616"/>
    </ligand>
</feature>
<feature type="binding site" evidence="1">
    <location>
        <position position="24"/>
    </location>
    <ligand>
        <name>ATP</name>
        <dbReference type="ChEBI" id="CHEBI:30616"/>
    </ligand>
</feature>
<feature type="binding site" evidence="1">
    <location>
        <position position="65"/>
    </location>
    <ligand>
        <name>ATP</name>
        <dbReference type="ChEBI" id="CHEBI:30616"/>
    </ligand>
</feature>
<feature type="binding site" evidence="1">
    <location>
        <position position="68"/>
    </location>
    <ligand>
        <name>ATP</name>
        <dbReference type="ChEBI" id="CHEBI:30616"/>
    </ligand>
</feature>
<feature type="binding site" evidence="1">
    <location>
        <position position="69"/>
    </location>
    <ligand>
        <name>ATP</name>
        <dbReference type="ChEBI" id="CHEBI:30616"/>
    </ligand>
</feature>
<feature type="binding site" evidence="1">
    <location>
        <position position="69"/>
    </location>
    <ligand>
        <name>Mg(2+)</name>
        <dbReference type="ChEBI" id="CHEBI:18420"/>
    </ligand>
</feature>
<feature type="binding site" evidence="1">
    <location>
        <position position="70"/>
    </location>
    <ligand>
        <name>ATP</name>
        <dbReference type="ChEBI" id="CHEBI:30616"/>
    </ligand>
</feature>
<feature type="binding site" evidence="1">
    <location>
        <begin position="131"/>
        <end position="133"/>
    </location>
    <ligand>
        <name>ATP</name>
        <dbReference type="ChEBI" id="CHEBI:30616"/>
    </ligand>
</feature>
<feature type="binding site" evidence="1">
    <location>
        <position position="174"/>
    </location>
    <ligand>
        <name>ATP</name>
        <dbReference type="ChEBI" id="CHEBI:30616"/>
    </ligand>
</feature>
<feature type="binding site" evidence="1">
    <location>
        <position position="184"/>
    </location>
    <ligand>
        <name>ATP</name>
        <dbReference type="ChEBI" id="CHEBI:30616"/>
    </ligand>
</feature>
<feature type="binding site" evidence="1">
    <location>
        <position position="221"/>
    </location>
    <ligand>
        <name>ATP</name>
        <dbReference type="ChEBI" id="CHEBI:30616"/>
    </ligand>
</feature>
<feature type="binding site" evidence="1">
    <location>
        <position position="294"/>
    </location>
    <ligand>
        <name>DNA</name>
        <dbReference type="ChEBI" id="CHEBI:16991"/>
    </ligand>
</feature>
<feature type="binding site" evidence="1">
    <location>
        <position position="313"/>
    </location>
    <ligand>
        <name>DNA</name>
        <dbReference type="ChEBI" id="CHEBI:16991"/>
    </ligand>
</feature>
<feature type="binding site" evidence="1">
    <location>
        <position position="318"/>
    </location>
    <ligand>
        <name>DNA</name>
        <dbReference type="ChEBI" id="CHEBI:16991"/>
    </ligand>
</feature>
<accession>Q7N547</accession>
<name>RUVB_PHOLL</name>
<proteinExistence type="inferred from homology"/>
<sequence length="335" mass="37081">MIEADRLVSAEVLQDDEAIDRAIRPKLLSEYVGQPQVCEQMEIFIQAARQRGDALDHLLIFGPPGLGKTTLANIVANEMGVNLRTTSGPVLEKAGDLAAMLTNLEPHDVLFIDEIHRLSPVVEEILYPAMEDYQLDIMIGEGPAARSIKIDLPPFTLIGATTRAGSLTSPLRDRFGIVQRLEFYNVDDLQSIVSRSARFMGVEITDDGARQVAMRSRGTPRITNRLLRRVRDFAQVKGNGAIDGNIATRALDMLSVDAAGFDYLDRKLLIAIIDKFMGGPVGVDNLAAAIGEERETIEDVLEPFLIQQGFIQRTSRGRIATEHAYRHFGMVRNQE</sequence>
<keyword id="KW-0067">ATP-binding</keyword>
<keyword id="KW-0963">Cytoplasm</keyword>
<keyword id="KW-0227">DNA damage</keyword>
<keyword id="KW-0233">DNA recombination</keyword>
<keyword id="KW-0234">DNA repair</keyword>
<keyword id="KW-0238">DNA-binding</keyword>
<keyword id="KW-0378">Hydrolase</keyword>
<keyword id="KW-0547">Nucleotide-binding</keyword>
<keyword id="KW-1185">Reference proteome</keyword>
<comment type="function">
    <text evidence="1">The RuvA-RuvB-RuvC complex processes Holliday junction (HJ) DNA during genetic recombination and DNA repair, while the RuvA-RuvB complex plays an important role in the rescue of blocked DNA replication forks via replication fork reversal (RFR). RuvA specifically binds to HJ cruciform DNA, conferring on it an open structure. The RuvB hexamer acts as an ATP-dependent pump, pulling dsDNA into and through the RuvAB complex. RuvB forms 2 homohexamers on either side of HJ DNA bound by 1 or 2 RuvA tetramers; 4 subunits per hexamer contact DNA at a time. Coordinated motions by a converter formed by DNA-disengaged RuvB subunits stimulates ATP hydrolysis and nucleotide exchange. Immobilization of the converter enables RuvB to convert the ATP-contained energy into a lever motion, pulling 2 nucleotides of DNA out of the RuvA tetramer per ATP hydrolyzed, thus driving DNA branch migration. The RuvB motors rotate together with the DNA substrate, which together with the progressing nucleotide cycle form the mechanistic basis for DNA recombination by continuous HJ branch migration. Branch migration allows RuvC to scan DNA until it finds its consensus sequence, where it cleaves and resolves cruciform DNA.</text>
</comment>
<comment type="catalytic activity">
    <reaction evidence="1">
        <text>ATP + H2O = ADP + phosphate + H(+)</text>
        <dbReference type="Rhea" id="RHEA:13065"/>
        <dbReference type="ChEBI" id="CHEBI:15377"/>
        <dbReference type="ChEBI" id="CHEBI:15378"/>
        <dbReference type="ChEBI" id="CHEBI:30616"/>
        <dbReference type="ChEBI" id="CHEBI:43474"/>
        <dbReference type="ChEBI" id="CHEBI:456216"/>
    </reaction>
</comment>
<comment type="subunit">
    <text evidence="1">Homohexamer. Forms an RuvA(8)-RuvB(12)-Holliday junction (HJ) complex. HJ DNA is sandwiched between 2 RuvA tetramers; dsDNA enters through RuvA and exits via RuvB. An RuvB hexamer assembles on each DNA strand where it exits the tetramer. Each RuvB hexamer is contacted by two RuvA subunits (via domain III) on 2 adjacent RuvB subunits; this complex drives branch migration. In the full resolvosome a probable DNA-RuvA(4)-RuvB(12)-RuvC(2) complex forms which resolves the HJ.</text>
</comment>
<comment type="subcellular location">
    <subcellularLocation>
        <location evidence="1">Cytoplasm</location>
    </subcellularLocation>
</comment>
<comment type="domain">
    <text evidence="1">Has 3 domains, the large (RuvB-L) and small ATPase (RuvB-S) domains and the C-terminal head (RuvB-H) domain. The head domain binds DNA, while the ATPase domains jointly bind ATP, ADP or are empty depending on the state of the subunit in the translocation cycle. During a single DNA translocation step the structure of each domain remains the same, but their relative positions change.</text>
</comment>
<comment type="similarity">
    <text evidence="1">Belongs to the RuvB family.</text>
</comment>
<protein>
    <recommendedName>
        <fullName evidence="1">Holliday junction branch migration complex subunit RuvB</fullName>
        <ecNumber evidence="1">3.6.4.-</ecNumber>
    </recommendedName>
</protein>
<evidence type="ECO:0000255" key="1">
    <source>
        <dbReference type="HAMAP-Rule" id="MF_00016"/>
    </source>
</evidence>